<evidence type="ECO:0000255" key="1">
    <source>
        <dbReference type="HAMAP-Rule" id="MF_00418"/>
    </source>
</evidence>
<evidence type="ECO:0000305" key="2"/>
<proteinExistence type="inferred from homology"/>
<comment type="function">
    <text evidence="1">Catalyzes the condensation of (S)-aspartate-beta-semialdehyde [(S)-ASA] and pyruvate to 4-hydroxy-tetrahydrodipicolinate (HTPA).</text>
</comment>
<comment type="catalytic activity">
    <reaction evidence="1">
        <text>L-aspartate 4-semialdehyde + pyruvate = (2S,4S)-4-hydroxy-2,3,4,5-tetrahydrodipicolinate + H2O + H(+)</text>
        <dbReference type="Rhea" id="RHEA:34171"/>
        <dbReference type="ChEBI" id="CHEBI:15361"/>
        <dbReference type="ChEBI" id="CHEBI:15377"/>
        <dbReference type="ChEBI" id="CHEBI:15378"/>
        <dbReference type="ChEBI" id="CHEBI:67139"/>
        <dbReference type="ChEBI" id="CHEBI:537519"/>
        <dbReference type="EC" id="4.3.3.7"/>
    </reaction>
</comment>
<comment type="pathway">
    <text evidence="1">Amino-acid biosynthesis; L-lysine biosynthesis via DAP pathway; (S)-tetrahydrodipicolinate from L-aspartate: step 3/4.</text>
</comment>
<comment type="subunit">
    <text evidence="1">Homotetramer; dimer of dimers.</text>
</comment>
<comment type="subcellular location">
    <subcellularLocation>
        <location evidence="1">Cytoplasm</location>
    </subcellularLocation>
</comment>
<comment type="similarity">
    <text evidence="1">Belongs to the DapA family.</text>
</comment>
<comment type="caution">
    <text evidence="2">Was originally thought to be a dihydrodipicolinate synthase (DHDPS), catalyzing the condensation of (S)-aspartate-beta-semialdehyde [(S)-ASA] and pyruvate to dihydrodipicolinate (DHDP). However, it was shown in E.coli that the product of the enzymatic reaction is not dihydrodipicolinate but in fact (4S)-4-hydroxy-2,3,4,5-tetrahydro-(2S)-dipicolinic acid (HTPA), and that the consecutive dehydration reaction leading to DHDP is not spontaneous but catalyzed by DapB.</text>
</comment>
<name>DAPA_PARD8</name>
<reference key="1">
    <citation type="journal article" date="2007" name="PLoS Biol.">
        <title>Evolution of symbiotic bacteria in the distal human intestine.</title>
        <authorList>
            <person name="Xu J."/>
            <person name="Mahowald M.A."/>
            <person name="Ley R.E."/>
            <person name="Lozupone C.A."/>
            <person name="Hamady M."/>
            <person name="Martens E.C."/>
            <person name="Henrissat B."/>
            <person name="Coutinho P.M."/>
            <person name="Minx P."/>
            <person name="Latreille P."/>
            <person name="Cordum H."/>
            <person name="Van Brunt A."/>
            <person name="Kim K."/>
            <person name="Fulton R.S."/>
            <person name="Fulton L.A."/>
            <person name="Clifton S.W."/>
            <person name="Wilson R.K."/>
            <person name="Knight R.D."/>
            <person name="Gordon J.I."/>
        </authorList>
    </citation>
    <scope>NUCLEOTIDE SEQUENCE [LARGE SCALE GENOMIC DNA]</scope>
    <source>
        <strain>ATCC 8503 / DSM 20701 / CIP 104284 / JCM 5825 / NCTC 11152</strain>
    </source>
</reference>
<feature type="chain" id="PRO_1000050235" description="4-hydroxy-tetrahydrodipicolinate synthase">
    <location>
        <begin position="1"/>
        <end position="297"/>
    </location>
</feature>
<feature type="active site" description="Proton donor/acceptor" evidence="1">
    <location>
        <position position="137"/>
    </location>
</feature>
<feature type="active site" description="Schiff-base intermediate with substrate" evidence="1">
    <location>
        <position position="166"/>
    </location>
</feature>
<feature type="binding site" evidence="1">
    <location>
        <position position="49"/>
    </location>
    <ligand>
        <name>pyruvate</name>
        <dbReference type="ChEBI" id="CHEBI:15361"/>
    </ligand>
</feature>
<feature type="binding site" evidence="1">
    <location>
        <position position="208"/>
    </location>
    <ligand>
        <name>pyruvate</name>
        <dbReference type="ChEBI" id="CHEBI:15361"/>
    </ligand>
</feature>
<feature type="site" description="Part of a proton relay during catalysis" evidence="1">
    <location>
        <position position="48"/>
    </location>
</feature>
<feature type="site" description="Part of a proton relay during catalysis" evidence="1">
    <location>
        <position position="111"/>
    </location>
</feature>
<accession>A6LA57</accession>
<gene>
    <name evidence="1" type="primary">dapA</name>
    <name type="ordered locus">BDI_0801</name>
</gene>
<protein>
    <recommendedName>
        <fullName evidence="1">4-hydroxy-tetrahydrodipicolinate synthase</fullName>
        <shortName evidence="1">HTPA synthase</shortName>
        <ecNumber evidence="1">4.3.3.7</ecNumber>
    </recommendedName>
</protein>
<sequence>MADINLKGMGVALITPFKEDESVDYEALGKLVDYQVQNGTDYLVVLGTTAETPTLTEEEKKNIISLVVTRVRGRIPIVLGVGGNCTRSVVEKLKTDNFEGIDAILSVVPYYNKPSQEGIYQHYKAIANATHLPIVLYNVPGRTGVNMTAETTLRIAREFDNVIAVKEASGNITQMDDIIKNKPARFNVISGDDGITFPLMTLGAVGVISVIGNAFPREFSRMVRLALAGDYDSARTIHHSFTELFSLLFVDGNPAGAKSMLNMMGFIENKLRLPLVPTRIVTYEKIREVLRQLSIKC</sequence>
<keyword id="KW-0028">Amino-acid biosynthesis</keyword>
<keyword id="KW-0963">Cytoplasm</keyword>
<keyword id="KW-0220">Diaminopimelate biosynthesis</keyword>
<keyword id="KW-0456">Lyase</keyword>
<keyword id="KW-0457">Lysine biosynthesis</keyword>
<keyword id="KW-1185">Reference proteome</keyword>
<keyword id="KW-0704">Schiff base</keyword>
<organism>
    <name type="scientific">Parabacteroides distasonis (strain ATCC 8503 / DSM 20701 / CIP 104284 / JCM 5825 / NCTC 11152)</name>
    <dbReference type="NCBI Taxonomy" id="435591"/>
    <lineage>
        <taxon>Bacteria</taxon>
        <taxon>Pseudomonadati</taxon>
        <taxon>Bacteroidota</taxon>
        <taxon>Bacteroidia</taxon>
        <taxon>Bacteroidales</taxon>
        <taxon>Tannerellaceae</taxon>
        <taxon>Parabacteroides</taxon>
    </lineage>
</organism>
<dbReference type="EC" id="4.3.3.7" evidence="1"/>
<dbReference type="EMBL" id="CP000140">
    <property type="protein sequence ID" value="ABR42571.1"/>
    <property type="molecule type" value="Genomic_DNA"/>
</dbReference>
<dbReference type="RefSeq" id="WP_005857419.1">
    <property type="nucleotide sequence ID" value="NZ_LR215978.1"/>
</dbReference>
<dbReference type="SMR" id="A6LA57"/>
<dbReference type="STRING" id="435591.BDI_0801"/>
<dbReference type="PaxDb" id="435591-BDI_0801"/>
<dbReference type="GeneID" id="93521568"/>
<dbReference type="KEGG" id="pdi:BDI_0801"/>
<dbReference type="eggNOG" id="COG0329">
    <property type="taxonomic scope" value="Bacteria"/>
</dbReference>
<dbReference type="HOGENOM" id="CLU_049343_7_0_10"/>
<dbReference type="BioCyc" id="PDIS435591:G1G5A-821-MONOMER"/>
<dbReference type="UniPathway" id="UPA00034">
    <property type="reaction ID" value="UER00017"/>
</dbReference>
<dbReference type="Proteomes" id="UP000000566">
    <property type="component" value="Chromosome"/>
</dbReference>
<dbReference type="GO" id="GO:0005829">
    <property type="term" value="C:cytosol"/>
    <property type="evidence" value="ECO:0007669"/>
    <property type="project" value="TreeGrafter"/>
</dbReference>
<dbReference type="GO" id="GO:0008840">
    <property type="term" value="F:4-hydroxy-tetrahydrodipicolinate synthase activity"/>
    <property type="evidence" value="ECO:0007669"/>
    <property type="project" value="UniProtKB-UniRule"/>
</dbReference>
<dbReference type="GO" id="GO:0019877">
    <property type="term" value="P:diaminopimelate biosynthetic process"/>
    <property type="evidence" value="ECO:0007669"/>
    <property type="project" value="UniProtKB-UniRule"/>
</dbReference>
<dbReference type="GO" id="GO:0009089">
    <property type="term" value="P:lysine biosynthetic process via diaminopimelate"/>
    <property type="evidence" value="ECO:0007669"/>
    <property type="project" value="UniProtKB-UniRule"/>
</dbReference>
<dbReference type="CDD" id="cd00950">
    <property type="entry name" value="DHDPS"/>
    <property type="match status" value="1"/>
</dbReference>
<dbReference type="Gene3D" id="3.20.20.70">
    <property type="entry name" value="Aldolase class I"/>
    <property type="match status" value="1"/>
</dbReference>
<dbReference type="HAMAP" id="MF_00418">
    <property type="entry name" value="DapA"/>
    <property type="match status" value="1"/>
</dbReference>
<dbReference type="InterPro" id="IPR013785">
    <property type="entry name" value="Aldolase_TIM"/>
</dbReference>
<dbReference type="InterPro" id="IPR005263">
    <property type="entry name" value="DapA"/>
</dbReference>
<dbReference type="InterPro" id="IPR002220">
    <property type="entry name" value="DapA-like"/>
</dbReference>
<dbReference type="InterPro" id="IPR020625">
    <property type="entry name" value="Schiff_base-form_aldolases_AS"/>
</dbReference>
<dbReference type="NCBIfam" id="TIGR00674">
    <property type="entry name" value="dapA"/>
    <property type="match status" value="1"/>
</dbReference>
<dbReference type="PANTHER" id="PTHR12128:SF66">
    <property type="entry name" value="4-HYDROXY-2-OXOGLUTARATE ALDOLASE, MITOCHONDRIAL"/>
    <property type="match status" value="1"/>
</dbReference>
<dbReference type="PANTHER" id="PTHR12128">
    <property type="entry name" value="DIHYDRODIPICOLINATE SYNTHASE"/>
    <property type="match status" value="1"/>
</dbReference>
<dbReference type="Pfam" id="PF00701">
    <property type="entry name" value="DHDPS"/>
    <property type="match status" value="1"/>
</dbReference>
<dbReference type="PIRSF" id="PIRSF001365">
    <property type="entry name" value="DHDPS"/>
    <property type="match status" value="1"/>
</dbReference>
<dbReference type="PRINTS" id="PR00146">
    <property type="entry name" value="DHPICSNTHASE"/>
</dbReference>
<dbReference type="SMART" id="SM01130">
    <property type="entry name" value="DHDPS"/>
    <property type="match status" value="1"/>
</dbReference>
<dbReference type="SUPFAM" id="SSF51569">
    <property type="entry name" value="Aldolase"/>
    <property type="match status" value="1"/>
</dbReference>
<dbReference type="PROSITE" id="PS00666">
    <property type="entry name" value="DHDPS_2"/>
    <property type="match status" value="1"/>
</dbReference>